<gene>
    <name type="primary">mutS</name>
    <name type="synonym">hexA</name>
    <name type="ordered locus">LL2210</name>
    <name type="ORF">L0277</name>
</gene>
<dbReference type="EMBL" id="AE005176">
    <property type="protein sequence ID" value="AAK06308.1"/>
    <property type="molecule type" value="Genomic_DNA"/>
</dbReference>
<dbReference type="PIR" id="B86901">
    <property type="entry name" value="B86901"/>
</dbReference>
<dbReference type="RefSeq" id="NP_268367.1">
    <property type="nucleotide sequence ID" value="NC_002662.1"/>
</dbReference>
<dbReference type="RefSeq" id="WP_010906385.1">
    <property type="nucleotide sequence ID" value="NC_002662.1"/>
</dbReference>
<dbReference type="SMR" id="Q9CDK9"/>
<dbReference type="PaxDb" id="272623-L0277"/>
<dbReference type="EnsemblBacteria" id="AAK06308">
    <property type="protein sequence ID" value="AAK06308"/>
    <property type="gene ID" value="L0277"/>
</dbReference>
<dbReference type="KEGG" id="lla:L0277"/>
<dbReference type="PATRIC" id="fig|272623.7.peg.2374"/>
<dbReference type="eggNOG" id="COG0249">
    <property type="taxonomic scope" value="Bacteria"/>
</dbReference>
<dbReference type="HOGENOM" id="CLU_002472_4_0_9"/>
<dbReference type="OrthoDB" id="9802448at2"/>
<dbReference type="Proteomes" id="UP000002196">
    <property type="component" value="Chromosome"/>
</dbReference>
<dbReference type="GO" id="GO:0005829">
    <property type="term" value="C:cytosol"/>
    <property type="evidence" value="ECO:0007669"/>
    <property type="project" value="TreeGrafter"/>
</dbReference>
<dbReference type="GO" id="GO:0005524">
    <property type="term" value="F:ATP binding"/>
    <property type="evidence" value="ECO:0007669"/>
    <property type="project" value="UniProtKB-UniRule"/>
</dbReference>
<dbReference type="GO" id="GO:0140664">
    <property type="term" value="F:ATP-dependent DNA damage sensor activity"/>
    <property type="evidence" value="ECO:0007669"/>
    <property type="project" value="InterPro"/>
</dbReference>
<dbReference type="GO" id="GO:0003684">
    <property type="term" value="F:damaged DNA binding"/>
    <property type="evidence" value="ECO:0007669"/>
    <property type="project" value="UniProtKB-UniRule"/>
</dbReference>
<dbReference type="GO" id="GO:0030983">
    <property type="term" value="F:mismatched DNA binding"/>
    <property type="evidence" value="ECO:0007669"/>
    <property type="project" value="InterPro"/>
</dbReference>
<dbReference type="GO" id="GO:0006298">
    <property type="term" value="P:mismatch repair"/>
    <property type="evidence" value="ECO:0007669"/>
    <property type="project" value="UniProtKB-UniRule"/>
</dbReference>
<dbReference type="CDD" id="cd03284">
    <property type="entry name" value="ABC_MutS1"/>
    <property type="match status" value="1"/>
</dbReference>
<dbReference type="FunFam" id="1.10.1420.10:FF:000001">
    <property type="entry name" value="DNA mismatch repair protein MutS"/>
    <property type="match status" value="1"/>
</dbReference>
<dbReference type="FunFam" id="3.40.1170.10:FF:000001">
    <property type="entry name" value="DNA mismatch repair protein MutS"/>
    <property type="match status" value="1"/>
</dbReference>
<dbReference type="FunFam" id="3.40.50.300:FF:000870">
    <property type="entry name" value="MutS protein homolog 4"/>
    <property type="match status" value="1"/>
</dbReference>
<dbReference type="Gene3D" id="1.10.1420.10">
    <property type="match status" value="2"/>
</dbReference>
<dbReference type="Gene3D" id="3.40.1170.10">
    <property type="entry name" value="DNA repair protein MutS, domain I"/>
    <property type="match status" value="1"/>
</dbReference>
<dbReference type="Gene3D" id="3.30.420.110">
    <property type="entry name" value="MutS, connector domain"/>
    <property type="match status" value="1"/>
</dbReference>
<dbReference type="Gene3D" id="3.40.50.300">
    <property type="entry name" value="P-loop containing nucleotide triphosphate hydrolases"/>
    <property type="match status" value="1"/>
</dbReference>
<dbReference type="HAMAP" id="MF_00096">
    <property type="entry name" value="MutS"/>
    <property type="match status" value="1"/>
</dbReference>
<dbReference type="InterPro" id="IPR005748">
    <property type="entry name" value="DNA_mismatch_repair_MutS"/>
</dbReference>
<dbReference type="InterPro" id="IPR007695">
    <property type="entry name" value="DNA_mismatch_repair_MutS-lik_N"/>
</dbReference>
<dbReference type="InterPro" id="IPR017261">
    <property type="entry name" value="DNA_mismatch_repair_MutS/MSH"/>
</dbReference>
<dbReference type="InterPro" id="IPR000432">
    <property type="entry name" value="DNA_mismatch_repair_MutS_C"/>
</dbReference>
<dbReference type="InterPro" id="IPR007861">
    <property type="entry name" value="DNA_mismatch_repair_MutS_clamp"/>
</dbReference>
<dbReference type="InterPro" id="IPR007696">
    <property type="entry name" value="DNA_mismatch_repair_MutS_core"/>
</dbReference>
<dbReference type="InterPro" id="IPR016151">
    <property type="entry name" value="DNA_mismatch_repair_MutS_N"/>
</dbReference>
<dbReference type="InterPro" id="IPR036187">
    <property type="entry name" value="DNA_mismatch_repair_MutS_sf"/>
</dbReference>
<dbReference type="InterPro" id="IPR007860">
    <property type="entry name" value="DNA_mmatch_repair_MutS_con_dom"/>
</dbReference>
<dbReference type="InterPro" id="IPR045076">
    <property type="entry name" value="MutS"/>
</dbReference>
<dbReference type="InterPro" id="IPR036678">
    <property type="entry name" value="MutS_con_dom_sf"/>
</dbReference>
<dbReference type="InterPro" id="IPR027417">
    <property type="entry name" value="P-loop_NTPase"/>
</dbReference>
<dbReference type="NCBIfam" id="TIGR01070">
    <property type="entry name" value="mutS1"/>
    <property type="match status" value="1"/>
</dbReference>
<dbReference type="NCBIfam" id="NF003810">
    <property type="entry name" value="PRK05399.1"/>
    <property type="match status" value="1"/>
</dbReference>
<dbReference type="PANTHER" id="PTHR11361:SF34">
    <property type="entry name" value="DNA MISMATCH REPAIR PROTEIN MSH1, MITOCHONDRIAL"/>
    <property type="match status" value="1"/>
</dbReference>
<dbReference type="PANTHER" id="PTHR11361">
    <property type="entry name" value="DNA MISMATCH REPAIR PROTEIN MUTS FAMILY MEMBER"/>
    <property type="match status" value="1"/>
</dbReference>
<dbReference type="Pfam" id="PF01624">
    <property type="entry name" value="MutS_I"/>
    <property type="match status" value="1"/>
</dbReference>
<dbReference type="Pfam" id="PF05188">
    <property type="entry name" value="MutS_II"/>
    <property type="match status" value="1"/>
</dbReference>
<dbReference type="Pfam" id="PF05192">
    <property type="entry name" value="MutS_III"/>
    <property type="match status" value="1"/>
</dbReference>
<dbReference type="Pfam" id="PF05190">
    <property type="entry name" value="MutS_IV"/>
    <property type="match status" value="1"/>
</dbReference>
<dbReference type="Pfam" id="PF00488">
    <property type="entry name" value="MutS_V"/>
    <property type="match status" value="1"/>
</dbReference>
<dbReference type="PIRSF" id="PIRSF037677">
    <property type="entry name" value="DNA_mis_repair_Msh6"/>
    <property type="match status" value="1"/>
</dbReference>
<dbReference type="SMART" id="SM00534">
    <property type="entry name" value="MUTSac"/>
    <property type="match status" value="1"/>
</dbReference>
<dbReference type="SMART" id="SM00533">
    <property type="entry name" value="MUTSd"/>
    <property type="match status" value="1"/>
</dbReference>
<dbReference type="SUPFAM" id="SSF55271">
    <property type="entry name" value="DNA repair protein MutS, domain I"/>
    <property type="match status" value="1"/>
</dbReference>
<dbReference type="SUPFAM" id="SSF53150">
    <property type="entry name" value="DNA repair protein MutS, domain II"/>
    <property type="match status" value="1"/>
</dbReference>
<dbReference type="SUPFAM" id="SSF48334">
    <property type="entry name" value="DNA repair protein MutS, domain III"/>
    <property type="match status" value="1"/>
</dbReference>
<dbReference type="SUPFAM" id="SSF52540">
    <property type="entry name" value="P-loop containing nucleoside triphosphate hydrolases"/>
    <property type="match status" value="1"/>
</dbReference>
<dbReference type="PROSITE" id="PS00486">
    <property type="entry name" value="DNA_MISMATCH_REPAIR_2"/>
    <property type="match status" value="1"/>
</dbReference>
<keyword id="KW-0067">ATP-binding</keyword>
<keyword id="KW-0227">DNA damage</keyword>
<keyword id="KW-0234">DNA repair</keyword>
<keyword id="KW-0238">DNA-binding</keyword>
<keyword id="KW-0547">Nucleotide-binding</keyword>
<keyword id="KW-1185">Reference proteome</keyword>
<reference key="1">
    <citation type="journal article" date="2001" name="Genome Res.">
        <title>The complete genome sequence of the lactic acid bacterium Lactococcus lactis ssp. lactis IL1403.</title>
        <authorList>
            <person name="Bolotin A."/>
            <person name="Wincker P."/>
            <person name="Mauger S."/>
            <person name="Jaillon O."/>
            <person name="Malarme K."/>
            <person name="Weissenbach J."/>
            <person name="Ehrlich S.D."/>
            <person name="Sorokin A."/>
        </authorList>
    </citation>
    <scope>NUCLEOTIDE SEQUENCE [LARGE SCALE GENOMIC DNA]</scope>
    <source>
        <strain>IL1403</strain>
    </source>
</reference>
<comment type="function">
    <text evidence="1">This protein is involved in the repair of mismatches in DNA. It is possible that it carries out the mismatch recognition step. This protein has a weak ATPase activity (By similarity).</text>
</comment>
<comment type="similarity">
    <text evidence="3">Belongs to the DNA mismatch repair MutS family.</text>
</comment>
<proteinExistence type="inferred from homology"/>
<accession>Q9CDK9</accession>
<sequence length="840" mass="94272">MAEKISPGMQQYLDIKQDYPDAFLLFRMGDFYELFYDDAVNAAQILELTLTSRNKNSENPIPMAGVPHHAAAEYIDKLVDLGYKVAVAEQMEDPKKAVGIVKRAVTQVITPGTTIDTANSVDNNFLVAIDFKDKHYALSYMDLSTGEFKVTELSEFSAVVGEIASLKAREIVAGFTLDESQLKVFERQMNLLISEQLEIPENLLIDLSGLTALENQVASKLLAYVKETQMRDLSHLQEVEHYEIKDFLQMDFATKSSLELTANKRENKKHGTLYWLLDETKTAMGTRMLRSWIDRPLISNSAIQKRMEIVQIFLDHFFERSDLIEALKGVYDLERLASRVSFGKAVPVDFLQLANSLSNVPAIKYILGMLNEAPLEELKSQLDEIPELSGLINSAISENASRTITEGGIIKKGYNAQLDKYREALENGTSWIAKLEADEKAKTGISTLRIDYNRKDGYYFHITQSQLNSVPEHFYRKATLKNSERFGSQELTEIEEIMLEAREKSSSLEYDLFMGLRTETEQYIGRLQALAKTIAEIDCLQSLSVVAEKQGYIRPTLTDGSRIVEIKGGRHAVVEAVMGAQEYVPNDIELPEQTDIQLITGPNMSGKSTYMRQFALTVIMAQIGSFVPAETANLPIFDAIFTRIGASDNLISGESTFMVEMSEANHAIQKASSRSLIIFDELGRGTATYDGMALAQAIIEYVHDHIGAKTLFATHYHELTDLDEALDHLDNVHVATLEQNGNVTFLHKITEGPADKSYGIHVAKIAGLPQPLLERADLILQKLENKPLPAKKVADEQEQLSLFDFTENSSEIIEKIKRQNVDNMTAREALNFLWELKDSL</sequence>
<organism>
    <name type="scientific">Lactococcus lactis subsp. lactis (strain IL1403)</name>
    <name type="common">Streptococcus lactis</name>
    <dbReference type="NCBI Taxonomy" id="272623"/>
    <lineage>
        <taxon>Bacteria</taxon>
        <taxon>Bacillati</taxon>
        <taxon>Bacillota</taxon>
        <taxon>Bacilli</taxon>
        <taxon>Lactobacillales</taxon>
        <taxon>Streptococcaceae</taxon>
        <taxon>Lactococcus</taxon>
    </lineage>
</organism>
<evidence type="ECO:0000250" key="1"/>
<evidence type="ECO:0000255" key="2"/>
<evidence type="ECO:0000305" key="3"/>
<protein>
    <recommendedName>
        <fullName>DNA mismatch repair protein MutS</fullName>
    </recommendedName>
</protein>
<feature type="chain" id="PRO_0000115104" description="DNA mismatch repair protein MutS">
    <location>
        <begin position="1"/>
        <end position="840"/>
    </location>
</feature>
<feature type="binding site" evidence="2">
    <location>
        <begin position="601"/>
        <end position="608"/>
    </location>
    <ligand>
        <name>ATP</name>
        <dbReference type="ChEBI" id="CHEBI:30616"/>
    </ligand>
</feature>
<name>MUTS_LACLA</name>